<feature type="chain" id="PRO_1000008953" description="Sulfate adenylyltransferase subunit 2">
    <location>
        <begin position="1"/>
        <end position="308"/>
    </location>
</feature>
<dbReference type="EC" id="2.7.7.4" evidence="1"/>
<dbReference type="EMBL" id="AE016825">
    <property type="protein sequence ID" value="AAQ59978.1"/>
    <property type="molecule type" value="Genomic_DNA"/>
</dbReference>
<dbReference type="RefSeq" id="WP_011135853.1">
    <property type="nucleotide sequence ID" value="NC_005085.1"/>
</dbReference>
<dbReference type="SMR" id="Q7NVN6"/>
<dbReference type="STRING" id="243365.CV_2306"/>
<dbReference type="GeneID" id="66367965"/>
<dbReference type="KEGG" id="cvi:CV_2306"/>
<dbReference type="eggNOG" id="COG0175">
    <property type="taxonomic scope" value="Bacteria"/>
</dbReference>
<dbReference type="HOGENOM" id="CLU_043026_0_0_4"/>
<dbReference type="OrthoDB" id="9772604at2"/>
<dbReference type="UniPathway" id="UPA00140">
    <property type="reaction ID" value="UER00204"/>
</dbReference>
<dbReference type="Proteomes" id="UP000001424">
    <property type="component" value="Chromosome"/>
</dbReference>
<dbReference type="GO" id="GO:0005524">
    <property type="term" value="F:ATP binding"/>
    <property type="evidence" value="ECO:0007669"/>
    <property type="project" value="UniProtKB-KW"/>
</dbReference>
<dbReference type="GO" id="GO:0004781">
    <property type="term" value="F:sulfate adenylyltransferase (ATP) activity"/>
    <property type="evidence" value="ECO:0007669"/>
    <property type="project" value="UniProtKB-UniRule"/>
</dbReference>
<dbReference type="GO" id="GO:0070814">
    <property type="term" value="P:hydrogen sulfide biosynthetic process"/>
    <property type="evidence" value="ECO:0007669"/>
    <property type="project" value="UniProtKB-UniRule"/>
</dbReference>
<dbReference type="GO" id="GO:0000103">
    <property type="term" value="P:sulfate assimilation"/>
    <property type="evidence" value="ECO:0007669"/>
    <property type="project" value="UniProtKB-UniRule"/>
</dbReference>
<dbReference type="CDD" id="cd23946">
    <property type="entry name" value="Sulfate_adenylyltransferase_2"/>
    <property type="match status" value="1"/>
</dbReference>
<dbReference type="FunFam" id="3.40.50.620:FF:000002">
    <property type="entry name" value="Sulfate adenylyltransferase subunit 2"/>
    <property type="match status" value="1"/>
</dbReference>
<dbReference type="Gene3D" id="3.40.50.620">
    <property type="entry name" value="HUPs"/>
    <property type="match status" value="1"/>
</dbReference>
<dbReference type="HAMAP" id="MF_00064">
    <property type="entry name" value="Sulf_adenylyltr_sub2"/>
    <property type="match status" value="1"/>
</dbReference>
<dbReference type="InterPro" id="IPR002500">
    <property type="entry name" value="PAPS_reduct_dom"/>
</dbReference>
<dbReference type="InterPro" id="IPR014729">
    <property type="entry name" value="Rossmann-like_a/b/a_fold"/>
</dbReference>
<dbReference type="InterPro" id="IPR011784">
    <property type="entry name" value="SO4_adenylTrfase_ssu"/>
</dbReference>
<dbReference type="InterPro" id="IPR050128">
    <property type="entry name" value="Sulfate_adenylyltrnsfr_sub2"/>
</dbReference>
<dbReference type="NCBIfam" id="TIGR02039">
    <property type="entry name" value="CysD"/>
    <property type="match status" value="1"/>
</dbReference>
<dbReference type="NCBIfam" id="NF003587">
    <property type="entry name" value="PRK05253.1"/>
    <property type="match status" value="1"/>
</dbReference>
<dbReference type="NCBIfam" id="NF009214">
    <property type="entry name" value="PRK12563.1"/>
    <property type="match status" value="1"/>
</dbReference>
<dbReference type="PANTHER" id="PTHR43196">
    <property type="entry name" value="SULFATE ADENYLYLTRANSFERASE SUBUNIT 2"/>
    <property type="match status" value="1"/>
</dbReference>
<dbReference type="PANTHER" id="PTHR43196:SF1">
    <property type="entry name" value="SULFATE ADENYLYLTRANSFERASE SUBUNIT 2"/>
    <property type="match status" value="1"/>
</dbReference>
<dbReference type="Pfam" id="PF01507">
    <property type="entry name" value="PAPS_reduct"/>
    <property type="match status" value="1"/>
</dbReference>
<dbReference type="PIRSF" id="PIRSF002936">
    <property type="entry name" value="CysDAde_trans"/>
    <property type="match status" value="1"/>
</dbReference>
<dbReference type="SUPFAM" id="SSF52402">
    <property type="entry name" value="Adenine nucleotide alpha hydrolases-like"/>
    <property type="match status" value="1"/>
</dbReference>
<accession>Q7NVN6</accession>
<proteinExistence type="inferred from homology"/>
<organism>
    <name type="scientific">Chromobacterium violaceum (strain ATCC 12472 / DSM 30191 / JCM 1249 / CCUG 213 / NBRC 12614 / NCIMB 9131 / NCTC 9757 / MK)</name>
    <dbReference type="NCBI Taxonomy" id="243365"/>
    <lineage>
        <taxon>Bacteria</taxon>
        <taxon>Pseudomonadati</taxon>
        <taxon>Pseudomonadota</taxon>
        <taxon>Betaproteobacteria</taxon>
        <taxon>Neisseriales</taxon>
        <taxon>Chromobacteriaceae</taxon>
        <taxon>Chromobacterium</taxon>
    </lineage>
</organism>
<comment type="function">
    <text evidence="1">With CysN forms the ATP sulfurylase (ATPS) that catalyzes the adenylation of sulfate producing adenosine 5'-phosphosulfate (APS) and diphosphate, the first enzymatic step in sulfur assimilation pathway. APS synthesis involves the formation of a high-energy phosphoric-sulfuric acid anhydride bond driven by GTP hydrolysis by CysN coupled to ATP hydrolysis by CysD.</text>
</comment>
<comment type="catalytic activity">
    <reaction evidence="1">
        <text>sulfate + ATP + H(+) = adenosine 5'-phosphosulfate + diphosphate</text>
        <dbReference type="Rhea" id="RHEA:18133"/>
        <dbReference type="ChEBI" id="CHEBI:15378"/>
        <dbReference type="ChEBI" id="CHEBI:16189"/>
        <dbReference type="ChEBI" id="CHEBI:30616"/>
        <dbReference type="ChEBI" id="CHEBI:33019"/>
        <dbReference type="ChEBI" id="CHEBI:58243"/>
        <dbReference type="EC" id="2.7.7.4"/>
    </reaction>
</comment>
<comment type="pathway">
    <text evidence="1">Sulfur metabolism; hydrogen sulfide biosynthesis; sulfite from sulfate: step 1/3.</text>
</comment>
<comment type="subunit">
    <text evidence="1">Heterodimer composed of CysD, the smaller subunit, and CysN.</text>
</comment>
<comment type="similarity">
    <text evidence="1">Belongs to the PAPS reductase family. CysD subfamily.</text>
</comment>
<protein>
    <recommendedName>
        <fullName evidence="1">Sulfate adenylyltransferase subunit 2</fullName>
        <ecNumber evidence="1">2.7.7.4</ecNumber>
    </recommendedName>
    <alternativeName>
        <fullName evidence="1">ATP-sulfurylase small subunit</fullName>
    </alternativeName>
    <alternativeName>
        <fullName evidence="1">Sulfate adenylate transferase</fullName>
        <shortName evidence="1">SAT</shortName>
    </alternativeName>
</protein>
<keyword id="KW-0067">ATP-binding</keyword>
<keyword id="KW-0547">Nucleotide-binding</keyword>
<keyword id="KW-0548">Nucleotidyltransferase</keyword>
<keyword id="KW-1185">Reference proteome</keyword>
<keyword id="KW-0808">Transferase</keyword>
<sequence>MDIDQARLTHLQQLEAESIHIIREVAAEFENPVMLYSIGKDSAVMLHLAKKAFYPGKPPFPLMHVDTTWKFRDMIALRDKQAKENGWDLIVHVNQDGVEAGINPFTAGSAKHTDVMKTEGLKQALNRHKFDAAFGGARRDEEKSRAKERVYSFRDKNHRWDPKNQRPELWNIYNGRIDKGESIRVFPLSNWTELDIWQYIYLENIEIVPLYFAAERPVVERDGMLIMIDDERILEYLTPEEKASIQTRKVRFRTLGCYPLTGAVESEAATLPEIIQEMLLTRTSERQGRLIDHDSAGSMEKKKMEGYF</sequence>
<evidence type="ECO:0000255" key="1">
    <source>
        <dbReference type="HAMAP-Rule" id="MF_00064"/>
    </source>
</evidence>
<gene>
    <name evidence="1" type="primary">cysD</name>
    <name type="ordered locus">CV_2306</name>
</gene>
<reference key="1">
    <citation type="journal article" date="2003" name="Proc. Natl. Acad. Sci. U.S.A.">
        <title>The complete genome sequence of Chromobacterium violaceum reveals remarkable and exploitable bacterial adaptability.</title>
        <authorList>
            <person name="Vasconcelos A.T.R."/>
            <person name="de Almeida D.F."/>
            <person name="Hungria M."/>
            <person name="Guimaraes C.T."/>
            <person name="Antonio R.V."/>
            <person name="Almeida F.C."/>
            <person name="de Almeida L.G.P."/>
            <person name="de Almeida R."/>
            <person name="Alves-Gomes J.A."/>
            <person name="Andrade E.M."/>
            <person name="Araripe J."/>
            <person name="de Araujo M.F.F."/>
            <person name="Astolfi-Filho S."/>
            <person name="Azevedo V."/>
            <person name="Baptista A.J."/>
            <person name="Bataus L.A.M."/>
            <person name="Batista J.S."/>
            <person name="Belo A."/>
            <person name="van den Berg C."/>
            <person name="Bogo M."/>
            <person name="Bonatto S."/>
            <person name="Bordignon J."/>
            <person name="Brigido M.M."/>
            <person name="Brito C.A."/>
            <person name="Brocchi M."/>
            <person name="Burity H.A."/>
            <person name="Camargo A.A."/>
            <person name="Cardoso D.D.P."/>
            <person name="Carneiro N.P."/>
            <person name="Carraro D.M."/>
            <person name="Carvalho C.M.B."/>
            <person name="Cascardo J.C.M."/>
            <person name="Cavada B.S."/>
            <person name="Chueire L.M.O."/>
            <person name="Creczynski-Pasa T.B."/>
            <person name="Cunha-Junior N.C."/>
            <person name="Fagundes N."/>
            <person name="Falcao C.L."/>
            <person name="Fantinatti F."/>
            <person name="Farias I.P."/>
            <person name="Felipe M.S.S."/>
            <person name="Ferrari L.P."/>
            <person name="Ferro J.A."/>
            <person name="Ferro M.I.T."/>
            <person name="Franco G.R."/>
            <person name="Freitas N.S.A."/>
            <person name="Furlan L.R."/>
            <person name="Gazzinelli R.T."/>
            <person name="Gomes E.A."/>
            <person name="Goncalves P.R."/>
            <person name="Grangeiro T.B."/>
            <person name="Grattapaglia D."/>
            <person name="Grisard E.C."/>
            <person name="Hanna E.S."/>
            <person name="Jardim S.N."/>
            <person name="Laurino J."/>
            <person name="Leoi L.C.T."/>
            <person name="Lima L.F.A."/>
            <person name="Loureiro M.F."/>
            <person name="Lyra M.C.C.P."/>
            <person name="Madeira H.M.F."/>
            <person name="Manfio G.P."/>
            <person name="Maranhao A.Q."/>
            <person name="Martins W.S."/>
            <person name="di Mauro S.M.Z."/>
            <person name="de Medeiros S.R.B."/>
            <person name="Meissner R.V."/>
            <person name="Moreira M.A.M."/>
            <person name="Nascimento F.F."/>
            <person name="Nicolas M.F."/>
            <person name="Oliveira J.G."/>
            <person name="Oliveira S.C."/>
            <person name="Paixao R.F.C."/>
            <person name="Parente J.A."/>
            <person name="Pedrosa F.O."/>
            <person name="Pena S.D.J."/>
            <person name="Pereira J.O."/>
            <person name="Pereira M."/>
            <person name="Pinto L.S.R.C."/>
            <person name="Pinto L.S."/>
            <person name="Porto J.I.R."/>
            <person name="Potrich D.P."/>
            <person name="Ramalho-Neto C.E."/>
            <person name="Reis A.M.M."/>
            <person name="Rigo L.U."/>
            <person name="Rondinelli E."/>
            <person name="Santos E.B.P."/>
            <person name="Santos F.R."/>
            <person name="Schneider M.P.C."/>
            <person name="Seuanez H.N."/>
            <person name="Silva A.M.R."/>
            <person name="da Silva A.L.C."/>
            <person name="Silva D.W."/>
            <person name="Silva R."/>
            <person name="Simoes I.C."/>
            <person name="Simon D."/>
            <person name="Soares C.M.A."/>
            <person name="Soares R.B.A."/>
            <person name="Souza E.M."/>
            <person name="Souza K.R.L."/>
            <person name="Souza R.C."/>
            <person name="Steffens M.B.R."/>
            <person name="Steindel M."/>
            <person name="Teixeira S.R."/>
            <person name="Urmenyi T."/>
            <person name="Vettore A."/>
            <person name="Wassem R."/>
            <person name="Zaha A."/>
            <person name="Simpson A.J.G."/>
        </authorList>
    </citation>
    <scope>NUCLEOTIDE SEQUENCE [LARGE SCALE GENOMIC DNA]</scope>
    <source>
        <strain>ATCC 12472 / DSM 30191 / JCM 1249 / CCUG 213 / NBRC 12614 / NCIMB 9131 / NCTC 9757 / MK</strain>
    </source>
</reference>
<name>CYSD_CHRVO</name>